<keyword id="KW-0963">Cytoplasm</keyword>
<keyword id="KW-0342">GTP-binding</keyword>
<keyword id="KW-0436">Ligase</keyword>
<keyword id="KW-0460">Magnesium</keyword>
<keyword id="KW-0479">Metal-binding</keyword>
<keyword id="KW-0547">Nucleotide-binding</keyword>
<keyword id="KW-0658">Purine biosynthesis</keyword>
<gene>
    <name evidence="1" type="primary">purA</name>
    <name type="ordered locus">Rmag_0531</name>
</gene>
<accession>A1AWH8</accession>
<evidence type="ECO:0000255" key="1">
    <source>
        <dbReference type="HAMAP-Rule" id="MF_00011"/>
    </source>
</evidence>
<proteinExistence type="inferred from homology"/>
<protein>
    <recommendedName>
        <fullName evidence="1">Adenylosuccinate synthetase</fullName>
        <shortName evidence="1">AMPSase</shortName>
        <shortName evidence="1">AdSS</shortName>
        <ecNumber evidence="1">6.3.4.4</ecNumber>
    </recommendedName>
    <alternativeName>
        <fullName evidence="1">IMP--aspartate ligase</fullName>
    </alternativeName>
</protein>
<dbReference type="EC" id="6.3.4.4" evidence="1"/>
<dbReference type="EMBL" id="CP000488">
    <property type="protein sequence ID" value="ABL02285.1"/>
    <property type="molecule type" value="Genomic_DNA"/>
</dbReference>
<dbReference type="RefSeq" id="WP_011737910.1">
    <property type="nucleotide sequence ID" value="NC_008610.1"/>
</dbReference>
<dbReference type="SMR" id="A1AWH8"/>
<dbReference type="STRING" id="413404.Rmag_0531"/>
<dbReference type="KEGG" id="rma:Rmag_0531"/>
<dbReference type="eggNOG" id="COG0104">
    <property type="taxonomic scope" value="Bacteria"/>
</dbReference>
<dbReference type="HOGENOM" id="CLU_029848_0_0_6"/>
<dbReference type="OrthoDB" id="9807553at2"/>
<dbReference type="UniPathway" id="UPA00075">
    <property type="reaction ID" value="UER00335"/>
</dbReference>
<dbReference type="Proteomes" id="UP000002587">
    <property type="component" value="Chromosome"/>
</dbReference>
<dbReference type="GO" id="GO:0005737">
    <property type="term" value="C:cytoplasm"/>
    <property type="evidence" value="ECO:0007669"/>
    <property type="project" value="UniProtKB-SubCell"/>
</dbReference>
<dbReference type="GO" id="GO:0004019">
    <property type="term" value="F:adenylosuccinate synthase activity"/>
    <property type="evidence" value="ECO:0007669"/>
    <property type="project" value="UniProtKB-UniRule"/>
</dbReference>
<dbReference type="GO" id="GO:0005525">
    <property type="term" value="F:GTP binding"/>
    <property type="evidence" value="ECO:0007669"/>
    <property type="project" value="UniProtKB-UniRule"/>
</dbReference>
<dbReference type="GO" id="GO:0000287">
    <property type="term" value="F:magnesium ion binding"/>
    <property type="evidence" value="ECO:0007669"/>
    <property type="project" value="UniProtKB-UniRule"/>
</dbReference>
<dbReference type="GO" id="GO:0044208">
    <property type="term" value="P:'de novo' AMP biosynthetic process"/>
    <property type="evidence" value="ECO:0007669"/>
    <property type="project" value="UniProtKB-UniRule"/>
</dbReference>
<dbReference type="GO" id="GO:0046040">
    <property type="term" value="P:IMP metabolic process"/>
    <property type="evidence" value="ECO:0007669"/>
    <property type="project" value="TreeGrafter"/>
</dbReference>
<dbReference type="CDD" id="cd03108">
    <property type="entry name" value="AdSS"/>
    <property type="match status" value="1"/>
</dbReference>
<dbReference type="FunFam" id="1.10.300.10:FF:000001">
    <property type="entry name" value="Adenylosuccinate synthetase"/>
    <property type="match status" value="1"/>
</dbReference>
<dbReference type="FunFam" id="3.90.170.10:FF:000001">
    <property type="entry name" value="Adenylosuccinate synthetase"/>
    <property type="match status" value="1"/>
</dbReference>
<dbReference type="Gene3D" id="3.40.440.10">
    <property type="entry name" value="Adenylosuccinate Synthetase, subunit A, domain 1"/>
    <property type="match status" value="1"/>
</dbReference>
<dbReference type="Gene3D" id="1.10.300.10">
    <property type="entry name" value="Adenylosuccinate Synthetase, subunit A, domain 2"/>
    <property type="match status" value="1"/>
</dbReference>
<dbReference type="Gene3D" id="3.90.170.10">
    <property type="entry name" value="Adenylosuccinate Synthetase, subunit A, domain 3"/>
    <property type="match status" value="1"/>
</dbReference>
<dbReference type="HAMAP" id="MF_00011">
    <property type="entry name" value="Adenylosucc_synth"/>
    <property type="match status" value="1"/>
</dbReference>
<dbReference type="InterPro" id="IPR018220">
    <property type="entry name" value="Adenylosuccin_syn_GTP-bd"/>
</dbReference>
<dbReference type="InterPro" id="IPR033128">
    <property type="entry name" value="Adenylosuccin_syn_Lys_AS"/>
</dbReference>
<dbReference type="InterPro" id="IPR042109">
    <property type="entry name" value="Adenylosuccinate_synth_dom1"/>
</dbReference>
<dbReference type="InterPro" id="IPR042110">
    <property type="entry name" value="Adenylosuccinate_synth_dom2"/>
</dbReference>
<dbReference type="InterPro" id="IPR042111">
    <property type="entry name" value="Adenylosuccinate_synth_dom3"/>
</dbReference>
<dbReference type="InterPro" id="IPR001114">
    <property type="entry name" value="Adenylosuccinate_synthetase"/>
</dbReference>
<dbReference type="InterPro" id="IPR027417">
    <property type="entry name" value="P-loop_NTPase"/>
</dbReference>
<dbReference type="NCBIfam" id="NF002223">
    <property type="entry name" value="PRK01117.1"/>
    <property type="match status" value="1"/>
</dbReference>
<dbReference type="NCBIfam" id="TIGR00184">
    <property type="entry name" value="purA"/>
    <property type="match status" value="1"/>
</dbReference>
<dbReference type="PANTHER" id="PTHR11846">
    <property type="entry name" value="ADENYLOSUCCINATE SYNTHETASE"/>
    <property type="match status" value="1"/>
</dbReference>
<dbReference type="PANTHER" id="PTHR11846:SF0">
    <property type="entry name" value="ADENYLOSUCCINATE SYNTHETASE"/>
    <property type="match status" value="1"/>
</dbReference>
<dbReference type="Pfam" id="PF00709">
    <property type="entry name" value="Adenylsucc_synt"/>
    <property type="match status" value="1"/>
</dbReference>
<dbReference type="SMART" id="SM00788">
    <property type="entry name" value="Adenylsucc_synt"/>
    <property type="match status" value="1"/>
</dbReference>
<dbReference type="SUPFAM" id="SSF52540">
    <property type="entry name" value="P-loop containing nucleoside triphosphate hydrolases"/>
    <property type="match status" value="1"/>
</dbReference>
<dbReference type="PROSITE" id="PS01266">
    <property type="entry name" value="ADENYLOSUCCIN_SYN_1"/>
    <property type="match status" value="1"/>
</dbReference>
<dbReference type="PROSITE" id="PS00513">
    <property type="entry name" value="ADENYLOSUCCIN_SYN_2"/>
    <property type="match status" value="1"/>
</dbReference>
<organism>
    <name type="scientific">Ruthia magnifica subsp. Calyptogena magnifica</name>
    <dbReference type="NCBI Taxonomy" id="413404"/>
    <lineage>
        <taxon>Bacteria</taxon>
        <taxon>Pseudomonadati</taxon>
        <taxon>Pseudomonadota</taxon>
        <taxon>Gammaproteobacteria</taxon>
        <taxon>Candidatus Pseudothioglobaceae</taxon>
        <taxon>Candidatus Ruthturnera</taxon>
    </lineage>
</organism>
<sequence>MSKNVVIIGTQWGDEGKGKVVDLITDKVASVVRFQGGHNAGHTLVINGKTTILHLIPSGILRNHVECLIGHGVVLSMSALLKEIAELEVADIDTTKRLKISPGCPLILPYHIELDNAREIKRGKAAIGTTGNGIGPAYEDKVARRGLRVSDLLDPNLFASKLKEVMEYHNFFLTHYYNANPVDYQTTLDEVLSQVEQTKHMIVDVTEQIHQHIANDENILFEGAQGALLDIDQGTYPFVTSSNTTSGAAVTGSGIGVTDIDYVLGIVKAYTTRVGGGPFPTELIYDVALDKGDEIGKVLGTVGHEFGATTGRQRRCGWLDMVTLKRSFNLNAVTGICLTKLDVMDTLETIKICTSYEIDGVETTIPPFSAEDYAKAKPIYIKIPGWKTSTIGTDSFDSLPVEAQSYIRKIEQLANLPVDILSTGPDRLQTLILKHPFE</sequence>
<comment type="function">
    <text evidence="1">Plays an important role in the de novo pathway of purine nucleotide biosynthesis. Catalyzes the first committed step in the biosynthesis of AMP from IMP.</text>
</comment>
<comment type="catalytic activity">
    <reaction evidence="1">
        <text>IMP + L-aspartate + GTP = N(6)-(1,2-dicarboxyethyl)-AMP + GDP + phosphate + 2 H(+)</text>
        <dbReference type="Rhea" id="RHEA:15753"/>
        <dbReference type="ChEBI" id="CHEBI:15378"/>
        <dbReference type="ChEBI" id="CHEBI:29991"/>
        <dbReference type="ChEBI" id="CHEBI:37565"/>
        <dbReference type="ChEBI" id="CHEBI:43474"/>
        <dbReference type="ChEBI" id="CHEBI:57567"/>
        <dbReference type="ChEBI" id="CHEBI:58053"/>
        <dbReference type="ChEBI" id="CHEBI:58189"/>
        <dbReference type="EC" id="6.3.4.4"/>
    </reaction>
</comment>
<comment type="cofactor">
    <cofactor evidence="1">
        <name>Mg(2+)</name>
        <dbReference type="ChEBI" id="CHEBI:18420"/>
    </cofactor>
    <text evidence="1">Binds 1 Mg(2+) ion per subunit.</text>
</comment>
<comment type="pathway">
    <text evidence="1">Purine metabolism; AMP biosynthesis via de novo pathway; AMP from IMP: step 1/2.</text>
</comment>
<comment type="subunit">
    <text evidence="1">Homodimer.</text>
</comment>
<comment type="subcellular location">
    <subcellularLocation>
        <location evidence="1">Cytoplasm</location>
    </subcellularLocation>
</comment>
<comment type="similarity">
    <text evidence="1">Belongs to the adenylosuccinate synthetase family.</text>
</comment>
<name>PURA_RUTMC</name>
<feature type="chain" id="PRO_1000000912" description="Adenylosuccinate synthetase">
    <location>
        <begin position="1"/>
        <end position="438"/>
    </location>
</feature>
<feature type="active site" description="Proton acceptor" evidence="1">
    <location>
        <position position="14"/>
    </location>
</feature>
<feature type="active site" description="Proton donor" evidence="1">
    <location>
        <position position="42"/>
    </location>
</feature>
<feature type="binding site" evidence="1">
    <location>
        <begin position="13"/>
        <end position="19"/>
    </location>
    <ligand>
        <name>GTP</name>
        <dbReference type="ChEBI" id="CHEBI:37565"/>
    </ligand>
</feature>
<feature type="binding site" description="in other chain" evidence="1">
    <location>
        <begin position="14"/>
        <end position="17"/>
    </location>
    <ligand>
        <name>IMP</name>
        <dbReference type="ChEBI" id="CHEBI:58053"/>
        <note>ligand shared between dimeric partners</note>
    </ligand>
</feature>
<feature type="binding site" evidence="1">
    <location>
        <position position="14"/>
    </location>
    <ligand>
        <name>Mg(2+)</name>
        <dbReference type="ChEBI" id="CHEBI:18420"/>
    </ligand>
</feature>
<feature type="binding site" description="in other chain" evidence="1">
    <location>
        <begin position="39"/>
        <end position="42"/>
    </location>
    <ligand>
        <name>IMP</name>
        <dbReference type="ChEBI" id="CHEBI:58053"/>
        <note>ligand shared between dimeric partners</note>
    </ligand>
</feature>
<feature type="binding site" evidence="1">
    <location>
        <begin position="41"/>
        <end position="43"/>
    </location>
    <ligand>
        <name>GTP</name>
        <dbReference type="ChEBI" id="CHEBI:37565"/>
    </ligand>
</feature>
<feature type="binding site" evidence="1">
    <location>
        <position position="41"/>
    </location>
    <ligand>
        <name>Mg(2+)</name>
        <dbReference type="ChEBI" id="CHEBI:18420"/>
    </ligand>
</feature>
<feature type="binding site" description="in other chain" evidence="1">
    <location>
        <position position="130"/>
    </location>
    <ligand>
        <name>IMP</name>
        <dbReference type="ChEBI" id="CHEBI:58053"/>
        <note>ligand shared between dimeric partners</note>
    </ligand>
</feature>
<feature type="binding site" evidence="1">
    <location>
        <position position="144"/>
    </location>
    <ligand>
        <name>IMP</name>
        <dbReference type="ChEBI" id="CHEBI:58053"/>
        <note>ligand shared between dimeric partners</note>
    </ligand>
</feature>
<feature type="binding site" description="in other chain" evidence="1">
    <location>
        <position position="225"/>
    </location>
    <ligand>
        <name>IMP</name>
        <dbReference type="ChEBI" id="CHEBI:58053"/>
        <note>ligand shared between dimeric partners</note>
    </ligand>
</feature>
<feature type="binding site" description="in other chain" evidence="1">
    <location>
        <position position="240"/>
    </location>
    <ligand>
        <name>IMP</name>
        <dbReference type="ChEBI" id="CHEBI:58053"/>
        <note>ligand shared between dimeric partners</note>
    </ligand>
</feature>
<feature type="binding site" evidence="1">
    <location>
        <begin position="308"/>
        <end position="314"/>
    </location>
    <ligand>
        <name>substrate</name>
    </ligand>
</feature>
<feature type="binding site" description="in other chain" evidence="1">
    <location>
        <position position="312"/>
    </location>
    <ligand>
        <name>IMP</name>
        <dbReference type="ChEBI" id="CHEBI:58053"/>
        <note>ligand shared between dimeric partners</note>
    </ligand>
</feature>
<feature type="binding site" evidence="1">
    <location>
        <position position="314"/>
    </location>
    <ligand>
        <name>GTP</name>
        <dbReference type="ChEBI" id="CHEBI:37565"/>
    </ligand>
</feature>
<feature type="binding site" evidence="1">
    <location>
        <begin position="340"/>
        <end position="342"/>
    </location>
    <ligand>
        <name>GTP</name>
        <dbReference type="ChEBI" id="CHEBI:37565"/>
    </ligand>
</feature>
<feature type="binding site" evidence="1">
    <location>
        <begin position="422"/>
        <end position="424"/>
    </location>
    <ligand>
        <name>GTP</name>
        <dbReference type="ChEBI" id="CHEBI:37565"/>
    </ligand>
</feature>
<reference key="1">
    <citation type="journal article" date="2007" name="Science">
        <title>The Calyptogena magnifica chemoautotrophic symbiont genome.</title>
        <authorList>
            <person name="Newton I.L.G."/>
            <person name="Woyke T."/>
            <person name="Auchtung T.A."/>
            <person name="Dilly G.F."/>
            <person name="Dutton R.J."/>
            <person name="Fisher M.C."/>
            <person name="Fontanez K.M."/>
            <person name="Lau E."/>
            <person name="Stewart F.J."/>
            <person name="Richardson P.M."/>
            <person name="Barry K.W."/>
            <person name="Saunders E."/>
            <person name="Detter J.C."/>
            <person name="Wu D."/>
            <person name="Eisen J.A."/>
            <person name="Cavanaugh C.M."/>
        </authorList>
    </citation>
    <scope>NUCLEOTIDE SEQUENCE [LARGE SCALE GENOMIC DNA]</scope>
</reference>